<gene>
    <name evidence="1" type="primary">matK</name>
</gene>
<comment type="function">
    <text evidence="1">Usually encoded in the trnK tRNA gene intron. Probably assists in splicing its own and other chloroplast group II introns.</text>
</comment>
<comment type="subcellular location">
    <subcellularLocation>
        <location>Plastid</location>
        <location>Chloroplast</location>
    </subcellularLocation>
</comment>
<comment type="similarity">
    <text evidence="1">Belongs to the intron maturase 2 family. MatK subfamily.</text>
</comment>
<organism>
    <name type="scientific">Trillium catesbaei</name>
    <name type="common">Catesby's trillium</name>
    <dbReference type="NCBI Taxonomy" id="82475"/>
    <lineage>
        <taxon>Eukaryota</taxon>
        <taxon>Viridiplantae</taxon>
        <taxon>Streptophyta</taxon>
        <taxon>Embryophyta</taxon>
        <taxon>Tracheophyta</taxon>
        <taxon>Spermatophyta</taxon>
        <taxon>Magnoliopsida</taxon>
        <taxon>Liliopsida</taxon>
        <taxon>Liliales</taxon>
        <taxon>Melanthiaceae</taxon>
        <taxon>Trillium</taxon>
    </lineage>
</organism>
<evidence type="ECO:0000255" key="1">
    <source>
        <dbReference type="HAMAP-Rule" id="MF_01390"/>
    </source>
</evidence>
<feature type="chain" id="PRO_0000143761" description="Maturase K">
    <location>
        <begin position="1"/>
        <end position="521"/>
    </location>
</feature>
<accession>Q7JEW7</accession>
<name>MATK_TRICT</name>
<sequence>MEELQLQGYLEKDGSRQQNFLYPLIFQEYIYTLAHDHGLNSSIFYEPMEIVGLGYDNKSSSVLVKRLITRMYQQNSLIYSMNDFNQNRFVGHNNSFYSNFDSQMVSEGFAVIVEIPFSLRLVPSSEEIQIPKSQNLRSIHSIFPFLEDKLSHLNYVLDILIPYPIHLEILVQILQCWIQDVPSLHFLRFFLHEFHNWNNLNLITPTKSISVFSKENKRLFWILYNSYVSEYEFLFVFLRKQSYYLRSTSSRAFLERTHFYVKIEHLIDVCHNHFQKILWFFKDSFMHYVRYKGKAILASRGTYLLIKKWKCYLVNFWQYNFHFWSKPYRIHINPFSNYSFYFLGYISSVLINPSAVKNQMLENFYLVDTLTQKFDTIVPVIPLIGSLSKAKFCTILGHPISKPIWAELSDSDIMDRFGRICRNLSHYHSGSSKKQSLYRIKYILRLSCARTLARKHKSTVRNLLQRLGSGLLEEFFTEEEQVISPIFPKTTLFPLHGSHRERIWYLDIIRINDLANYLDWS</sequence>
<proteinExistence type="inferred from homology"/>
<keyword id="KW-0150">Chloroplast</keyword>
<keyword id="KW-0507">mRNA processing</keyword>
<keyword id="KW-0934">Plastid</keyword>
<keyword id="KW-0694">RNA-binding</keyword>
<keyword id="KW-0819">tRNA processing</keyword>
<reference key="1">
    <citation type="journal article" date="1999" name="J. Plant Res.">
        <title>Molecular systematics of Trilliaceae I. Phylogenetic analyses of Trillium using matK gene sequences.</title>
        <authorList>
            <person name="Kazempour Osaloo S."/>
            <person name="Utech F.H."/>
            <person name="Ohara M."/>
            <person name="Kawano S."/>
        </authorList>
    </citation>
    <scope>NUCLEOTIDE SEQUENCE [GENOMIC DNA]</scope>
    <source>
        <tissue>Leaf</tissue>
    </source>
</reference>
<geneLocation type="chloroplast"/>
<dbReference type="EMBL" id="AB017380">
    <property type="protein sequence ID" value="BAA36796.1"/>
    <property type="molecule type" value="Genomic_DNA"/>
</dbReference>
<dbReference type="GO" id="GO:0009507">
    <property type="term" value="C:chloroplast"/>
    <property type="evidence" value="ECO:0007669"/>
    <property type="project" value="UniProtKB-SubCell"/>
</dbReference>
<dbReference type="GO" id="GO:0003723">
    <property type="term" value="F:RNA binding"/>
    <property type="evidence" value="ECO:0007669"/>
    <property type="project" value="UniProtKB-KW"/>
</dbReference>
<dbReference type="GO" id="GO:0006397">
    <property type="term" value="P:mRNA processing"/>
    <property type="evidence" value="ECO:0007669"/>
    <property type="project" value="UniProtKB-KW"/>
</dbReference>
<dbReference type="GO" id="GO:0008380">
    <property type="term" value="P:RNA splicing"/>
    <property type="evidence" value="ECO:0007669"/>
    <property type="project" value="UniProtKB-UniRule"/>
</dbReference>
<dbReference type="GO" id="GO:0008033">
    <property type="term" value="P:tRNA processing"/>
    <property type="evidence" value="ECO:0007669"/>
    <property type="project" value="UniProtKB-KW"/>
</dbReference>
<dbReference type="HAMAP" id="MF_01390">
    <property type="entry name" value="MatK"/>
    <property type="match status" value="1"/>
</dbReference>
<dbReference type="InterPro" id="IPR024937">
    <property type="entry name" value="Domain_X"/>
</dbReference>
<dbReference type="InterPro" id="IPR002866">
    <property type="entry name" value="Maturase_MatK"/>
</dbReference>
<dbReference type="InterPro" id="IPR024942">
    <property type="entry name" value="Maturase_MatK_N"/>
</dbReference>
<dbReference type="PANTHER" id="PTHR34811">
    <property type="entry name" value="MATURASE K"/>
    <property type="match status" value="1"/>
</dbReference>
<dbReference type="PANTHER" id="PTHR34811:SF1">
    <property type="entry name" value="MATURASE K"/>
    <property type="match status" value="1"/>
</dbReference>
<dbReference type="Pfam" id="PF01348">
    <property type="entry name" value="Intron_maturas2"/>
    <property type="match status" value="1"/>
</dbReference>
<dbReference type="Pfam" id="PF01824">
    <property type="entry name" value="MatK_N"/>
    <property type="match status" value="1"/>
</dbReference>
<protein>
    <recommendedName>
        <fullName evidence="1">Maturase K</fullName>
    </recommendedName>
    <alternativeName>
        <fullName evidence="1">Intron maturase</fullName>
    </alternativeName>
</protein>